<organism>
    <name type="scientific">Mus musculus</name>
    <name type="common">Mouse</name>
    <dbReference type="NCBI Taxonomy" id="10090"/>
    <lineage>
        <taxon>Eukaryota</taxon>
        <taxon>Metazoa</taxon>
        <taxon>Chordata</taxon>
        <taxon>Craniata</taxon>
        <taxon>Vertebrata</taxon>
        <taxon>Euteleostomi</taxon>
        <taxon>Mammalia</taxon>
        <taxon>Eutheria</taxon>
        <taxon>Euarchontoglires</taxon>
        <taxon>Glires</taxon>
        <taxon>Rodentia</taxon>
        <taxon>Myomorpha</taxon>
        <taxon>Muroidea</taxon>
        <taxon>Muridae</taxon>
        <taxon>Murinae</taxon>
        <taxon>Mus</taxon>
        <taxon>Mus</taxon>
    </lineage>
</organism>
<feature type="chain" id="PRO_0000233057" description="BET1-like protein">
    <location>
        <begin position="1"/>
        <end position="111"/>
    </location>
</feature>
<feature type="topological domain" description="Cytoplasmic" evidence="4">
    <location>
        <begin position="1"/>
        <end position="86"/>
    </location>
</feature>
<feature type="transmembrane region" description="Helical; Anchor for type IV membrane protein" evidence="4">
    <location>
        <begin position="87"/>
        <end position="107"/>
    </location>
</feature>
<feature type="topological domain" description="Lumenal" evidence="4">
    <location>
        <begin position="108"/>
        <end position="111"/>
    </location>
</feature>
<feature type="domain" description="t-SNARE coiled-coil homology" evidence="5">
    <location>
        <begin position="15"/>
        <end position="77"/>
    </location>
</feature>
<feature type="modified residue" description="Phosphoserine" evidence="3">
    <location>
        <position position="9"/>
    </location>
</feature>
<feature type="modified residue" description="Phosphoserine" evidence="3">
    <location>
        <position position="37"/>
    </location>
</feature>
<feature type="sequence conflict" description="In Ref. 2; BAB27666." evidence="7" ref="2">
    <original>R</original>
    <variation>S</variation>
    <location>
        <position position="108"/>
    </location>
</feature>
<gene>
    <name evidence="11" type="primary">Bet1l</name>
    <name evidence="11" type="synonym">Gs15</name>
</gene>
<accession>O35153</accession>
<accession>Q9D0E4</accession>
<sequence>MADWTRAQSSGAVEDILDRENKRMADSLASKVTRLKSLALDIDRDTEDQNRYLDGMDSDFTSVTGLLTGSVKRFSTMARSGRDNRKLLCGMAVVLIVAFFILSYLLSRTRT</sequence>
<evidence type="ECO:0000250" key="1"/>
<evidence type="ECO:0000250" key="2">
    <source>
        <dbReference type="UniProtKB" id="O35152"/>
    </source>
</evidence>
<evidence type="ECO:0000250" key="3">
    <source>
        <dbReference type="UniProtKB" id="Q9NYM9"/>
    </source>
</evidence>
<evidence type="ECO:0000255" key="4"/>
<evidence type="ECO:0000255" key="5">
    <source>
        <dbReference type="PROSITE-ProRule" id="PRU00202"/>
    </source>
</evidence>
<evidence type="ECO:0000269" key="6">
    <source>
    </source>
</evidence>
<evidence type="ECO:0000305" key="7"/>
<evidence type="ECO:0000312" key="8">
    <source>
        <dbReference type="EMBL" id="AAB66321.1"/>
    </source>
</evidence>
<evidence type="ECO:0000312" key="9">
    <source>
        <dbReference type="EMBL" id="BAB27666.1"/>
    </source>
</evidence>
<evidence type="ECO:0000312" key="10">
    <source>
        <dbReference type="EMBL" id="BAE36260.1"/>
    </source>
</evidence>
<evidence type="ECO:0000312" key="11">
    <source>
        <dbReference type="MGI" id="MGI:1913128"/>
    </source>
</evidence>
<comment type="function">
    <text evidence="2">Vesicle SNARE required for targeting and fusion of retrograde transport vesicles with the Golgi complex. Required for the integrity of the Golgi complex (By similarity).</text>
</comment>
<comment type="subunit">
    <text evidence="2 3">Component of a SNARE complex consisting of STX5, YKT6, GOSR1 and BET1L (By similarity). Interacts with STX5 (By similarity).</text>
</comment>
<comment type="subcellular location">
    <subcellularLocation>
        <location evidence="1">Golgi apparatus membrane</location>
        <topology evidence="1">Single-pass type IV membrane protein</topology>
    </subcellularLocation>
    <subcellularLocation>
        <location evidence="1">Golgi apparatus</location>
        <location evidence="1">trans-Golgi network membrane</location>
    </subcellularLocation>
    <text evidence="1">Present throughout the Golgi apparatus, with increasing concentration from cis-Golgi to the trans-Golgi face of the stacks.</text>
</comment>
<keyword id="KW-0175">Coiled coil</keyword>
<keyword id="KW-0333">Golgi apparatus</keyword>
<keyword id="KW-0472">Membrane</keyword>
<keyword id="KW-0597">Phosphoprotein</keyword>
<keyword id="KW-0653">Protein transport</keyword>
<keyword id="KW-1185">Reference proteome</keyword>
<keyword id="KW-0812">Transmembrane</keyword>
<keyword id="KW-1133">Transmembrane helix</keyword>
<keyword id="KW-0813">Transport</keyword>
<protein>
    <recommendedName>
        <fullName>BET1-like protein</fullName>
    </recommendedName>
    <alternativeName>
        <fullName>Golgi SNARE with a size of 15 kDa</fullName>
        <shortName>GOS-15</shortName>
        <shortName>GS15</shortName>
    </alternativeName>
    <alternativeName>
        <fullName>Vesicle transport protein GOS15</fullName>
    </alternativeName>
</protein>
<reference evidence="7 8" key="1">
    <citation type="journal article" date="1997" name="J. Biol. Chem.">
        <title>GS15, a 15-kilodalton Golgi soluble N-ethylmaleimide-sensitive factor attachment protein receptor (SNARE) homologous to rbet1.</title>
        <authorList>
            <person name="Xu Y."/>
            <person name="Wong S.H."/>
            <person name="Zhang T."/>
            <person name="Subramaniam V.N."/>
            <person name="Hong W."/>
        </authorList>
    </citation>
    <scope>NUCLEOTIDE SEQUENCE [MRNA]</scope>
    <source>
        <strain evidence="6">C57BL/6J</strain>
        <tissue evidence="6">Embryo</tissue>
    </source>
</reference>
<reference evidence="9" key="2">
    <citation type="journal article" date="2005" name="Science">
        <title>The transcriptional landscape of the mammalian genome.</title>
        <authorList>
            <person name="Carninci P."/>
            <person name="Kasukawa T."/>
            <person name="Katayama S."/>
            <person name="Gough J."/>
            <person name="Frith M.C."/>
            <person name="Maeda N."/>
            <person name="Oyama R."/>
            <person name="Ravasi T."/>
            <person name="Lenhard B."/>
            <person name="Wells C."/>
            <person name="Kodzius R."/>
            <person name="Shimokawa K."/>
            <person name="Bajic V.B."/>
            <person name="Brenner S.E."/>
            <person name="Batalov S."/>
            <person name="Forrest A.R."/>
            <person name="Zavolan M."/>
            <person name="Davis M.J."/>
            <person name="Wilming L.G."/>
            <person name="Aidinis V."/>
            <person name="Allen J.E."/>
            <person name="Ambesi-Impiombato A."/>
            <person name="Apweiler R."/>
            <person name="Aturaliya R.N."/>
            <person name="Bailey T.L."/>
            <person name="Bansal M."/>
            <person name="Baxter L."/>
            <person name="Beisel K.W."/>
            <person name="Bersano T."/>
            <person name="Bono H."/>
            <person name="Chalk A.M."/>
            <person name="Chiu K.P."/>
            <person name="Choudhary V."/>
            <person name="Christoffels A."/>
            <person name="Clutterbuck D.R."/>
            <person name="Crowe M.L."/>
            <person name="Dalla E."/>
            <person name="Dalrymple B.P."/>
            <person name="de Bono B."/>
            <person name="Della Gatta G."/>
            <person name="di Bernardo D."/>
            <person name="Down T."/>
            <person name="Engstrom P."/>
            <person name="Fagiolini M."/>
            <person name="Faulkner G."/>
            <person name="Fletcher C.F."/>
            <person name="Fukushima T."/>
            <person name="Furuno M."/>
            <person name="Futaki S."/>
            <person name="Gariboldi M."/>
            <person name="Georgii-Hemming P."/>
            <person name="Gingeras T.R."/>
            <person name="Gojobori T."/>
            <person name="Green R.E."/>
            <person name="Gustincich S."/>
            <person name="Harbers M."/>
            <person name="Hayashi Y."/>
            <person name="Hensch T.K."/>
            <person name="Hirokawa N."/>
            <person name="Hill D."/>
            <person name="Huminiecki L."/>
            <person name="Iacono M."/>
            <person name="Ikeo K."/>
            <person name="Iwama A."/>
            <person name="Ishikawa T."/>
            <person name="Jakt M."/>
            <person name="Kanapin A."/>
            <person name="Katoh M."/>
            <person name="Kawasawa Y."/>
            <person name="Kelso J."/>
            <person name="Kitamura H."/>
            <person name="Kitano H."/>
            <person name="Kollias G."/>
            <person name="Krishnan S.P."/>
            <person name="Kruger A."/>
            <person name="Kummerfeld S.K."/>
            <person name="Kurochkin I.V."/>
            <person name="Lareau L.F."/>
            <person name="Lazarevic D."/>
            <person name="Lipovich L."/>
            <person name="Liu J."/>
            <person name="Liuni S."/>
            <person name="McWilliam S."/>
            <person name="Madan Babu M."/>
            <person name="Madera M."/>
            <person name="Marchionni L."/>
            <person name="Matsuda H."/>
            <person name="Matsuzawa S."/>
            <person name="Miki H."/>
            <person name="Mignone F."/>
            <person name="Miyake S."/>
            <person name="Morris K."/>
            <person name="Mottagui-Tabar S."/>
            <person name="Mulder N."/>
            <person name="Nakano N."/>
            <person name="Nakauchi H."/>
            <person name="Ng P."/>
            <person name="Nilsson R."/>
            <person name="Nishiguchi S."/>
            <person name="Nishikawa S."/>
            <person name="Nori F."/>
            <person name="Ohara O."/>
            <person name="Okazaki Y."/>
            <person name="Orlando V."/>
            <person name="Pang K.C."/>
            <person name="Pavan W.J."/>
            <person name="Pavesi G."/>
            <person name="Pesole G."/>
            <person name="Petrovsky N."/>
            <person name="Piazza S."/>
            <person name="Reed J."/>
            <person name="Reid J.F."/>
            <person name="Ring B.Z."/>
            <person name="Ringwald M."/>
            <person name="Rost B."/>
            <person name="Ruan Y."/>
            <person name="Salzberg S.L."/>
            <person name="Sandelin A."/>
            <person name="Schneider C."/>
            <person name="Schoenbach C."/>
            <person name="Sekiguchi K."/>
            <person name="Semple C.A."/>
            <person name="Seno S."/>
            <person name="Sessa L."/>
            <person name="Sheng Y."/>
            <person name="Shibata Y."/>
            <person name="Shimada H."/>
            <person name="Shimada K."/>
            <person name="Silva D."/>
            <person name="Sinclair B."/>
            <person name="Sperling S."/>
            <person name="Stupka E."/>
            <person name="Sugiura K."/>
            <person name="Sultana R."/>
            <person name="Takenaka Y."/>
            <person name="Taki K."/>
            <person name="Tammoja K."/>
            <person name="Tan S.L."/>
            <person name="Tang S."/>
            <person name="Taylor M.S."/>
            <person name="Tegner J."/>
            <person name="Teichmann S.A."/>
            <person name="Ueda H.R."/>
            <person name="van Nimwegen E."/>
            <person name="Verardo R."/>
            <person name="Wei C.L."/>
            <person name="Yagi K."/>
            <person name="Yamanishi H."/>
            <person name="Zabarovsky E."/>
            <person name="Zhu S."/>
            <person name="Zimmer A."/>
            <person name="Hide W."/>
            <person name="Bult C."/>
            <person name="Grimmond S.M."/>
            <person name="Teasdale R.D."/>
            <person name="Liu E.T."/>
            <person name="Brusic V."/>
            <person name="Quackenbush J."/>
            <person name="Wahlestedt C."/>
            <person name="Mattick J.S."/>
            <person name="Hume D.A."/>
            <person name="Kai C."/>
            <person name="Sasaki D."/>
            <person name="Tomaru Y."/>
            <person name="Fukuda S."/>
            <person name="Kanamori-Katayama M."/>
            <person name="Suzuki M."/>
            <person name="Aoki J."/>
            <person name="Arakawa T."/>
            <person name="Iida J."/>
            <person name="Imamura K."/>
            <person name="Itoh M."/>
            <person name="Kato T."/>
            <person name="Kawaji H."/>
            <person name="Kawagashira N."/>
            <person name="Kawashima T."/>
            <person name="Kojima M."/>
            <person name="Kondo S."/>
            <person name="Konno H."/>
            <person name="Nakano K."/>
            <person name="Ninomiya N."/>
            <person name="Nishio T."/>
            <person name="Okada M."/>
            <person name="Plessy C."/>
            <person name="Shibata K."/>
            <person name="Shiraki T."/>
            <person name="Suzuki S."/>
            <person name="Tagami M."/>
            <person name="Waki K."/>
            <person name="Watahiki A."/>
            <person name="Okamura-Oho Y."/>
            <person name="Suzuki H."/>
            <person name="Kawai J."/>
            <person name="Hayashizaki Y."/>
        </authorList>
    </citation>
    <scope>NUCLEOTIDE SEQUENCE [LARGE SCALE MRNA]</scope>
    <source>
        <strain evidence="9">C57BL/6J</strain>
        <tissue evidence="9">Embryo</tissue>
        <tissue evidence="10">Head</tissue>
    </source>
</reference>
<dbReference type="EMBL" id="AF003999">
    <property type="protein sequence ID" value="AAB66321.1"/>
    <property type="molecule type" value="mRNA"/>
</dbReference>
<dbReference type="EMBL" id="AK011508">
    <property type="protein sequence ID" value="BAB27666.1"/>
    <property type="molecule type" value="mRNA"/>
</dbReference>
<dbReference type="EMBL" id="AK161239">
    <property type="protein sequence ID" value="BAE36260.1"/>
    <property type="molecule type" value="mRNA"/>
</dbReference>
<dbReference type="CCDS" id="CCDS21987.1"/>
<dbReference type="RefSeq" id="NP_061212.3">
    <property type="nucleotide sequence ID" value="NM_018742.5"/>
</dbReference>
<dbReference type="RefSeq" id="XP_030098658.1">
    <property type="nucleotide sequence ID" value="XM_030242798.2"/>
</dbReference>
<dbReference type="SMR" id="O35153"/>
<dbReference type="BioGRID" id="207647">
    <property type="interactions" value="1"/>
</dbReference>
<dbReference type="FunCoup" id="O35153">
    <property type="interactions" value="1036"/>
</dbReference>
<dbReference type="STRING" id="10090.ENSMUSP00000026557"/>
<dbReference type="iPTMnet" id="O35153"/>
<dbReference type="PhosphoSitePlus" id="O35153"/>
<dbReference type="SwissPalm" id="O35153"/>
<dbReference type="jPOST" id="O35153"/>
<dbReference type="PaxDb" id="10090-ENSMUSP00000026557"/>
<dbReference type="PeptideAtlas" id="O35153"/>
<dbReference type="ProteomicsDB" id="265170"/>
<dbReference type="Pumba" id="O35153"/>
<dbReference type="DNASU" id="54399"/>
<dbReference type="Ensembl" id="ENSMUST00000026557.10">
    <property type="protein sequence ID" value="ENSMUSP00000026557.9"/>
    <property type="gene ID" value="ENSMUSG00000025484.10"/>
</dbReference>
<dbReference type="GeneID" id="54399"/>
<dbReference type="KEGG" id="mmu:54399"/>
<dbReference type="UCSC" id="uc009kii.2">
    <property type="organism name" value="mouse"/>
</dbReference>
<dbReference type="AGR" id="MGI:1913128"/>
<dbReference type="CTD" id="51272"/>
<dbReference type="MGI" id="MGI:1913128">
    <property type="gene designation" value="Bet1l"/>
</dbReference>
<dbReference type="VEuPathDB" id="HostDB:ENSMUSG00000025484"/>
<dbReference type="eggNOG" id="KOG3385">
    <property type="taxonomic scope" value="Eukaryota"/>
</dbReference>
<dbReference type="GeneTree" id="ENSGT00960000190623"/>
<dbReference type="HOGENOM" id="CLU_086133_2_2_1"/>
<dbReference type="InParanoid" id="O35153"/>
<dbReference type="OMA" id="HDEVENH"/>
<dbReference type="OrthoDB" id="32297at9989"/>
<dbReference type="PhylomeDB" id="O35153"/>
<dbReference type="TreeFam" id="TF323307"/>
<dbReference type="Reactome" id="R-MMU-6807878">
    <property type="pathway name" value="COPI-mediated anterograde transport"/>
</dbReference>
<dbReference type="Reactome" id="R-MMU-6811438">
    <property type="pathway name" value="Intra-Golgi traffic"/>
</dbReference>
<dbReference type="BioGRID-ORCS" id="54399">
    <property type="hits" value="1 hit in 78 CRISPR screens"/>
</dbReference>
<dbReference type="ChiTaRS" id="Bet1l">
    <property type="organism name" value="mouse"/>
</dbReference>
<dbReference type="PRO" id="PR:O35153"/>
<dbReference type="Proteomes" id="UP000000589">
    <property type="component" value="Chromosome 7"/>
</dbReference>
<dbReference type="RNAct" id="O35153">
    <property type="molecule type" value="protein"/>
</dbReference>
<dbReference type="Bgee" id="ENSMUSG00000025484">
    <property type="expression patterns" value="Expressed in dentate gyrus of hippocampal formation granule cell and 256 other cell types or tissues"/>
</dbReference>
<dbReference type="ExpressionAtlas" id="O35153">
    <property type="expression patterns" value="baseline and differential"/>
</dbReference>
<dbReference type="GO" id="GO:0005829">
    <property type="term" value="C:cytosol"/>
    <property type="evidence" value="ECO:0007669"/>
    <property type="project" value="GOC"/>
</dbReference>
<dbReference type="GO" id="GO:0005768">
    <property type="term" value="C:endosome"/>
    <property type="evidence" value="ECO:0007669"/>
    <property type="project" value="Ensembl"/>
</dbReference>
<dbReference type="GO" id="GO:0000139">
    <property type="term" value="C:Golgi membrane"/>
    <property type="evidence" value="ECO:0000314"/>
    <property type="project" value="MGI"/>
</dbReference>
<dbReference type="GO" id="GO:0005795">
    <property type="term" value="C:Golgi stack"/>
    <property type="evidence" value="ECO:0000314"/>
    <property type="project" value="MGI"/>
</dbReference>
<dbReference type="GO" id="GO:0005484">
    <property type="term" value="F:SNAP receptor activity"/>
    <property type="evidence" value="ECO:0000314"/>
    <property type="project" value="MGI"/>
</dbReference>
<dbReference type="GO" id="GO:0015031">
    <property type="term" value="P:protein transport"/>
    <property type="evidence" value="ECO:0007669"/>
    <property type="project" value="UniProtKB-KW"/>
</dbReference>
<dbReference type="GO" id="GO:2000156">
    <property type="term" value="P:regulation of retrograde vesicle-mediated transport, Golgi to ER"/>
    <property type="evidence" value="ECO:0007669"/>
    <property type="project" value="Ensembl"/>
</dbReference>
<dbReference type="GO" id="GO:0042147">
    <property type="term" value="P:retrograde transport, endosome to Golgi"/>
    <property type="evidence" value="ECO:0007669"/>
    <property type="project" value="Ensembl"/>
</dbReference>
<dbReference type="CDD" id="cd15853">
    <property type="entry name" value="SNARE_Bet1"/>
    <property type="match status" value="1"/>
</dbReference>
<dbReference type="FunFam" id="1.20.5.110:FF:000038">
    <property type="entry name" value="BET1-like protein isoform X2"/>
    <property type="match status" value="1"/>
</dbReference>
<dbReference type="Gene3D" id="1.20.5.110">
    <property type="match status" value="1"/>
</dbReference>
<dbReference type="InterPro" id="IPR039899">
    <property type="entry name" value="BET1_SNARE"/>
</dbReference>
<dbReference type="InterPro" id="IPR000727">
    <property type="entry name" value="T_SNARE_dom"/>
</dbReference>
<dbReference type="PANTHER" id="PTHR12791">
    <property type="entry name" value="GOLGI SNARE BET1-RELATED"/>
    <property type="match status" value="1"/>
</dbReference>
<dbReference type="SUPFAM" id="SSF58038">
    <property type="entry name" value="SNARE fusion complex"/>
    <property type="match status" value="1"/>
</dbReference>
<dbReference type="PROSITE" id="PS50192">
    <property type="entry name" value="T_SNARE"/>
    <property type="match status" value="1"/>
</dbReference>
<proteinExistence type="inferred from homology"/>
<name>BET1L_MOUSE</name>